<name>YQGF_RHOPB</name>
<proteinExistence type="inferred from homology"/>
<dbReference type="EC" id="3.1.-.-" evidence="1"/>
<dbReference type="EMBL" id="CP000301">
    <property type="protein sequence ID" value="ABD87809.1"/>
    <property type="molecule type" value="Genomic_DNA"/>
</dbReference>
<dbReference type="SMR" id="Q215X7"/>
<dbReference type="STRING" id="316056.RPC_2255"/>
<dbReference type="KEGG" id="rpc:RPC_2255"/>
<dbReference type="eggNOG" id="COG0816">
    <property type="taxonomic scope" value="Bacteria"/>
</dbReference>
<dbReference type="HOGENOM" id="CLU_098240_1_1_5"/>
<dbReference type="OrthoDB" id="9796140at2"/>
<dbReference type="GO" id="GO:0005829">
    <property type="term" value="C:cytosol"/>
    <property type="evidence" value="ECO:0007669"/>
    <property type="project" value="TreeGrafter"/>
</dbReference>
<dbReference type="GO" id="GO:0004518">
    <property type="term" value="F:nuclease activity"/>
    <property type="evidence" value="ECO:0007669"/>
    <property type="project" value="UniProtKB-KW"/>
</dbReference>
<dbReference type="GO" id="GO:0000967">
    <property type="term" value="P:rRNA 5'-end processing"/>
    <property type="evidence" value="ECO:0007669"/>
    <property type="project" value="UniProtKB-UniRule"/>
</dbReference>
<dbReference type="CDD" id="cd16964">
    <property type="entry name" value="YqgF"/>
    <property type="match status" value="1"/>
</dbReference>
<dbReference type="Gene3D" id="3.30.420.140">
    <property type="entry name" value="YqgF/RNase H-like domain"/>
    <property type="match status" value="1"/>
</dbReference>
<dbReference type="HAMAP" id="MF_00651">
    <property type="entry name" value="Nuclease_YqgF"/>
    <property type="match status" value="1"/>
</dbReference>
<dbReference type="InterPro" id="IPR012337">
    <property type="entry name" value="RNaseH-like_sf"/>
</dbReference>
<dbReference type="InterPro" id="IPR005227">
    <property type="entry name" value="YqgF"/>
</dbReference>
<dbReference type="InterPro" id="IPR006641">
    <property type="entry name" value="YqgF/RNaseH-like_dom"/>
</dbReference>
<dbReference type="InterPro" id="IPR037027">
    <property type="entry name" value="YqgF/RNaseH-like_dom_sf"/>
</dbReference>
<dbReference type="NCBIfam" id="TIGR00250">
    <property type="entry name" value="RNAse_H_YqgF"/>
    <property type="match status" value="1"/>
</dbReference>
<dbReference type="PANTHER" id="PTHR33317">
    <property type="entry name" value="POLYNUCLEOTIDYL TRANSFERASE, RIBONUCLEASE H-LIKE SUPERFAMILY PROTEIN"/>
    <property type="match status" value="1"/>
</dbReference>
<dbReference type="PANTHER" id="PTHR33317:SF4">
    <property type="entry name" value="POLYNUCLEOTIDYL TRANSFERASE, RIBONUCLEASE H-LIKE SUPERFAMILY PROTEIN"/>
    <property type="match status" value="1"/>
</dbReference>
<dbReference type="Pfam" id="PF03652">
    <property type="entry name" value="RuvX"/>
    <property type="match status" value="1"/>
</dbReference>
<dbReference type="SMART" id="SM00732">
    <property type="entry name" value="YqgFc"/>
    <property type="match status" value="1"/>
</dbReference>
<dbReference type="SUPFAM" id="SSF53098">
    <property type="entry name" value="Ribonuclease H-like"/>
    <property type="match status" value="1"/>
</dbReference>
<comment type="function">
    <text evidence="1">Could be a nuclease involved in processing of the 5'-end of pre-16S rRNA.</text>
</comment>
<comment type="subcellular location">
    <subcellularLocation>
        <location evidence="1">Cytoplasm</location>
    </subcellularLocation>
</comment>
<comment type="similarity">
    <text evidence="1">Belongs to the YqgF nuclease family.</text>
</comment>
<keyword id="KW-0963">Cytoplasm</keyword>
<keyword id="KW-0378">Hydrolase</keyword>
<keyword id="KW-0540">Nuclease</keyword>
<keyword id="KW-0690">Ribosome biogenesis</keyword>
<gene>
    <name type="ordered locus">RPC_2255</name>
</gene>
<protein>
    <recommendedName>
        <fullName evidence="1">Putative pre-16S rRNA nuclease</fullName>
        <ecNumber evidence="1">3.1.-.-</ecNumber>
    </recommendedName>
</protein>
<reference key="1">
    <citation type="submission" date="2006-03" db="EMBL/GenBank/DDBJ databases">
        <title>Complete sequence of Rhodopseudomonas palustris BisB18.</title>
        <authorList>
            <consortium name="US DOE Joint Genome Institute"/>
            <person name="Copeland A."/>
            <person name="Lucas S."/>
            <person name="Lapidus A."/>
            <person name="Barry K."/>
            <person name="Detter J.C."/>
            <person name="Glavina del Rio T."/>
            <person name="Hammon N."/>
            <person name="Israni S."/>
            <person name="Dalin E."/>
            <person name="Tice H."/>
            <person name="Pitluck S."/>
            <person name="Chain P."/>
            <person name="Malfatti S."/>
            <person name="Shin M."/>
            <person name="Vergez L."/>
            <person name="Schmutz J."/>
            <person name="Larimer F."/>
            <person name="Land M."/>
            <person name="Hauser L."/>
            <person name="Pelletier D.A."/>
            <person name="Kyrpides N."/>
            <person name="Anderson I."/>
            <person name="Oda Y."/>
            <person name="Harwood C.S."/>
            <person name="Richardson P."/>
        </authorList>
    </citation>
    <scope>NUCLEOTIDE SEQUENCE [LARGE SCALE GENOMIC DNA]</scope>
    <source>
        <strain>BisB18</strain>
    </source>
</reference>
<evidence type="ECO:0000255" key="1">
    <source>
        <dbReference type="HAMAP-Rule" id="MF_00651"/>
    </source>
</evidence>
<accession>Q215X7</accession>
<sequence>MPAPILPLIEAAAQWPARGALIGLDLGTKTIGVAVSDPDRRLATGVETIIHTAFKANAARLLLLAGQRNAVGFVLGLPINMDGSEGPRAQSTRAFARNFARLTDLPIGLWDERLSTSAVERELIANDVSRAKRAKVIDEHAAIFILQGALDRLTVLNAAPRTD</sequence>
<organism>
    <name type="scientific">Rhodopseudomonas palustris (strain BisB18)</name>
    <dbReference type="NCBI Taxonomy" id="316056"/>
    <lineage>
        <taxon>Bacteria</taxon>
        <taxon>Pseudomonadati</taxon>
        <taxon>Pseudomonadota</taxon>
        <taxon>Alphaproteobacteria</taxon>
        <taxon>Hyphomicrobiales</taxon>
        <taxon>Nitrobacteraceae</taxon>
        <taxon>Rhodopseudomonas</taxon>
    </lineage>
</organism>
<feature type="chain" id="PRO_0000257578" description="Putative pre-16S rRNA nuclease">
    <location>
        <begin position="1"/>
        <end position="163"/>
    </location>
</feature>